<feature type="chain" id="PRO_0000277180" description="DNA-directed RNA polymerase subunit beta'">
    <location>
        <begin position="1"/>
        <end position="682"/>
    </location>
</feature>
<feature type="binding site" evidence="1">
    <location>
        <position position="69"/>
    </location>
    <ligand>
        <name>Zn(2+)</name>
        <dbReference type="ChEBI" id="CHEBI:29105"/>
    </ligand>
</feature>
<feature type="binding site" evidence="1">
    <location>
        <position position="71"/>
    </location>
    <ligand>
        <name>Zn(2+)</name>
        <dbReference type="ChEBI" id="CHEBI:29105"/>
    </ligand>
</feature>
<feature type="binding site" evidence="1">
    <location>
        <position position="87"/>
    </location>
    <ligand>
        <name>Zn(2+)</name>
        <dbReference type="ChEBI" id="CHEBI:29105"/>
    </ligand>
</feature>
<feature type="binding site" evidence="1">
    <location>
        <position position="90"/>
    </location>
    <ligand>
        <name>Zn(2+)</name>
        <dbReference type="ChEBI" id="CHEBI:29105"/>
    </ligand>
</feature>
<feature type="binding site" evidence="1">
    <location>
        <position position="489"/>
    </location>
    <ligand>
        <name>Mg(2+)</name>
        <dbReference type="ChEBI" id="CHEBI:18420"/>
    </ligand>
</feature>
<feature type="binding site" evidence="1">
    <location>
        <position position="491"/>
    </location>
    <ligand>
        <name>Mg(2+)</name>
        <dbReference type="ChEBI" id="CHEBI:18420"/>
    </ligand>
</feature>
<feature type="binding site" evidence="1">
    <location>
        <position position="493"/>
    </location>
    <ligand>
        <name>Mg(2+)</name>
        <dbReference type="ChEBI" id="CHEBI:18420"/>
    </ligand>
</feature>
<evidence type="ECO:0000255" key="1">
    <source>
        <dbReference type="HAMAP-Rule" id="MF_01323"/>
    </source>
</evidence>
<reference key="1">
    <citation type="journal article" date="2006" name="BMC Evol. Biol.">
        <title>Phylogenetic analyses of Vitis (Vitaceae) based on complete chloroplast genome sequences: effects of taxon sampling and phylogenetic methods on resolving relationships among rosids.</title>
        <authorList>
            <person name="Jansen R.K."/>
            <person name="Kaittanis C."/>
            <person name="Lee S.-B."/>
            <person name="Saski C."/>
            <person name="Tomkins J."/>
            <person name="Alverson A.J."/>
            <person name="Daniell H."/>
        </authorList>
    </citation>
    <scope>NUCLEOTIDE SEQUENCE [LARGE SCALE GENOMIC DNA]</scope>
    <source>
        <strain>cv. Maxxa</strain>
    </source>
</reference>
<dbReference type="EC" id="2.7.7.6" evidence="1"/>
<dbReference type="EMBL" id="DQ424856">
    <property type="protein sequence ID" value="ABE47525.1"/>
    <property type="molecule type" value="Genomic_DNA"/>
</dbReference>
<dbReference type="RefSeq" id="YP_567067.1">
    <property type="nucleotide sequence ID" value="NC_007957.1"/>
</dbReference>
<dbReference type="SMR" id="Q0ZJ29"/>
<dbReference type="FunCoup" id="Q0ZJ29">
    <property type="interactions" value="81"/>
</dbReference>
<dbReference type="STRING" id="29760.Q0ZJ29"/>
<dbReference type="PaxDb" id="29760-VIT_12s0134g00050.t01"/>
<dbReference type="GeneID" id="4025098"/>
<dbReference type="KEGG" id="vvi:4025098"/>
<dbReference type="InParanoid" id="Q0ZJ29"/>
<dbReference type="OrthoDB" id="1862828at2759"/>
<dbReference type="Proteomes" id="UP000009183">
    <property type="component" value="Chloroplast"/>
</dbReference>
<dbReference type="ExpressionAtlas" id="Q0ZJ29">
    <property type="expression patterns" value="baseline and differential"/>
</dbReference>
<dbReference type="GO" id="GO:0009507">
    <property type="term" value="C:chloroplast"/>
    <property type="evidence" value="ECO:0007669"/>
    <property type="project" value="UniProtKB-SubCell"/>
</dbReference>
<dbReference type="GO" id="GO:0000428">
    <property type="term" value="C:DNA-directed RNA polymerase complex"/>
    <property type="evidence" value="ECO:0007669"/>
    <property type="project" value="UniProtKB-KW"/>
</dbReference>
<dbReference type="GO" id="GO:0005739">
    <property type="term" value="C:mitochondrion"/>
    <property type="evidence" value="ECO:0007669"/>
    <property type="project" value="GOC"/>
</dbReference>
<dbReference type="GO" id="GO:0003677">
    <property type="term" value="F:DNA binding"/>
    <property type="evidence" value="ECO:0007669"/>
    <property type="project" value="UniProtKB-UniRule"/>
</dbReference>
<dbReference type="GO" id="GO:0003899">
    <property type="term" value="F:DNA-directed RNA polymerase activity"/>
    <property type="evidence" value="ECO:0007669"/>
    <property type="project" value="UniProtKB-UniRule"/>
</dbReference>
<dbReference type="GO" id="GO:0000287">
    <property type="term" value="F:magnesium ion binding"/>
    <property type="evidence" value="ECO:0007669"/>
    <property type="project" value="UniProtKB-UniRule"/>
</dbReference>
<dbReference type="GO" id="GO:0008270">
    <property type="term" value="F:zinc ion binding"/>
    <property type="evidence" value="ECO:0007669"/>
    <property type="project" value="UniProtKB-UniRule"/>
</dbReference>
<dbReference type="GO" id="GO:0006351">
    <property type="term" value="P:DNA-templated transcription"/>
    <property type="evidence" value="ECO:0007669"/>
    <property type="project" value="UniProtKB-UniRule"/>
</dbReference>
<dbReference type="FunFam" id="1.10.40.90:FF:000002">
    <property type="entry name" value="DNA-directed RNA polymerase subunit"/>
    <property type="match status" value="1"/>
</dbReference>
<dbReference type="FunFam" id="4.10.860.120:FF:000007">
    <property type="entry name" value="DNA-directed RNA polymerase subunit gamma"/>
    <property type="match status" value="1"/>
</dbReference>
<dbReference type="Gene3D" id="1.10.40.90">
    <property type="match status" value="1"/>
</dbReference>
<dbReference type="Gene3D" id="2.40.40.20">
    <property type="match status" value="1"/>
</dbReference>
<dbReference type="Gene3D" id="4.10.860.120">
    <property type="entry name" value="RNA polymerase II, clamp domain"/>
    <property type="match status" value="1"/>
</dbReference>
<dbReference type="Gene3D" id="1.10.274.100">
    <property type="entry name" value="RNA polymerase Rpb1, domain 3"/>
    <property type="match status" value="1"/>
</dbReference>
<dbReference type="HAMAP" id="MF_01323">
    <property type="entry name" value="RNApol_bact_RpoC1"/>
    <property type="match status" value="1"/>
</dbReference>
<dbReference type="InterPro" id="IPR045867">
    <property type="entry name" value="DNA-dir_RpoC_beta_prime"/>
</dbReference>
<dbReference type="InterPro" id="IPR000722">
    <property type="entry name" value="RNA_pol_asu"/>
</dbReference>
<dbReference type="InterPro" id="IPR006592">
    <property type="entry name" value="RNA_pol_N"/>
</dbReference>
<dbReference type="InterPro" id="IPR007080">
    <property type="entry name" value="RNA_pol_Rpb1_1"/>
</dbReference>
<dbReference type="InterPro" id="IPR042102">
    <property type="entry name" value="RNA_pol_Rpb1_3_sf"/>
</dbReference>
<dbReference type="InterPro" id="IPR044893">
    <property type="entry name" value="RNA_pol_Rpb1_clamp_domain"/>
</dbReference>
<dbReference type="InterPro" id="IPR034678">
    <property type="entry name" value="RNApol_RpoC1"/>
</dbReference>
<dbReference type="PANTHER" id="PTHR19376">
    <property type="entry name" value="DNA-DIRECTED RNA POLYMERASE"/>
    <property type="match status" value="1"/>
</dbReference>
<dbReference type="PANTHER" id="PTHR19376:SF54">
    <property type="entry name" value="DNA-DIRECTED RNA POLYMERASE SUBUNIT BETA"/>
    <property type="match status" value="1"/>
</dbReference>
<dbReference type="Pfam" id="PF04997">
    <property type="entry name" value="RNA_pol_Rpb1_1"/>
    <property type="match status" value="2"/>
</dbReference>
<dbReference type="Pfam" id="PF00623">
    <property type="entry name" value="RNA_pol_Rpb1_2"/>
    <property type="match status" value="2"/>
</dbReference>
<dbReference type="SMART" id="SM00663">
    <property type="entry name" value="RPOLA_N"/>
    <property type="match status" value="1"/>
</dbReference>
<dbReference type="SUPFAM" id="SSF64484">
    <property type="entry name" value="beta and beta-prime subunits of DNA dependent RNA-polymerase"/>
    <property type="match status" value="1"/>
</dbReference>
<proteinExistence type="inferred from homology"/>
<comment type="function">
    <text evidence="1">DNA-dependent RNA polymerase catalyzes the transcription of DNA into RNA using the four ribonucleoside triphosphates as substrates.</text>
</comment>
<comment type="catalytic activity">
    <reaction evidence="1">
        <text>RNA(n) + a ribonucleoside 5'-triphosphate = RNA(n+1) + diphosphate</text>
        <dbReference type="Rhea" id="RHEA:21248"/>
        <dbReference type="Rhea" id="RHEA-COMP:14527"/>
        <dbReference type="Rhea" id="RHEA-COMP:17342"/>
        <dbReference type="ChEBI" id="CHEBI:33019"/>
        <dbReference type="ChEBI" id="CHEBI:61557"/>
        <dbReference type="ChEBI" id="CHEBI:140395"/>
        <dbReference type="EC" id="2.7.7.6"/>
    </reaction>
</comment>
<comment type="cofactor">
    <cofactor evidence="1">
        <name>Mg(2+)</name>
        <dbReference type="ChEBI" id="CHEBI:18420"/>
    </cofactor>
    <text evidence="1">Binds 1 Mg(2+) ion per subunit.</text>
</comment>
<comment type="cofactor">
    <cofactor evidence="1">
        <name>Zn(2+)</name>
        <dbReference type="ChEBI" id="CHEBI:29105"/>
    </cofactor>
    <text evidence="1">Binds 1 Zn(2+) ion per subunit.</text>
</comment>
<comment type="subunit">
    <text evidence="1">In plastids the minimal PEP RNA polymerase catalytic core is composed of four subunits: alpha, beta, beta', and beta''. When a (nuclear-encoded) sigma factor is associated with the core the holoenzyme is formed, which can initiate transcription.</text>
</comment>
<comment type="subcellular location">
    <subcellularLocation>
        <location evidence="1">Plastid</location>
        <location evidence="1">Chloroplast</location>
    </subcellularLocation>
</comment>
<comment type="similarity">
    <text evidence="1">Belongs to the RNA polymerase beta' chain family. RpoC1 subfamily.</text>
</comment>
<protein>
    <recommendedName>
        <fullName evidence="1">DNA-directed RNA polymerase subunit beta'</fullName>
        <ecNumber evidence="1">2.7.7.6</ecNumber>
    </recommendedName>
    <alternativeName>
        <fullName evidence="1">PEP</fullName>
    </alternativeName>
    <alternativeName>
        <fullName evidence="1">Plastid-encoded RNA polymerase subunit beta'</fullName>
        <shortName evidence="1">RNA polymerase subunit beta'</shortName>
    </alternativeName>
</protein>
<name>RPOC1_VITVI</name>
<gene>
    <name evidence="1" type="primary">rpoC1</name>
</gene>
<organism>
    <name type="scientific">Vitis vinifera</name>
    <name type="common">Grape</name>
    <dbReference type="NCBI Taxonomy" id="29760"/>
    <lineage>
        <taxon>Eukaryota</taxon>
        <taxon>Viridiplantae</taxon>
        <taxon>Streptophyta</taxon>
        <taxon>Embryophyta</taxon>
        <taxon>Tracheophyta</taxon>
        <taxon>Spermatophyta</taxon>
        <taxon>Magnoliopsida</taxon>
        <taxon>eudicotyledons</taxon>
        <taxon>Gunneridae</taxon>
        <taxon>Pentapetalae</taxon>
        <taxon>rosids</taxon>
        <taxon>Vitales</taxon>
        <taxon>Vitaceae</taxon>
        <taxon>Viteae</taxon>
        <taxon>Vitis</taxon>
    </lineage>
</organism>
<geneLocation type="chloroplast"/>
<accession>Q0ZJ29</accession>
<sequence>MIDRYKHQQLRIGSVSPQQISAWANKILPNGEIIGEVTKPYTFHYKTNKPEKDGLFCERIFGPIKSGICACGNYRVIGDEKDDPKFCEQCGVEFVDSRIRRYQMGYIKLACPVTHVWYLKRLPSYIANLLDKPLKELEGLVYCDFSFARPIEKKPTFLRLRGSFEYEIQSWKYSIPLFFTTQGFDTFRNREISTGAGAIREQLDDLDLRIIIDYSLVEWKELGEEGPTGNEWEDRKIGRRKDFLVRRMELAKHFIRTNIEPEWMVLCLLPVLPPELRPIIQIDGGKLMSSDINELYRRVIYRNNTLTDLLTTSRSTPGELVMCQEKLVQEAVDTLLDNGIRGQPMRDGHNKVYKSFSDVIEGKEGRFRETLLGKRVDYSGRSVIVVGPSLSLHQCGLPREIAIELFQTFLIRGLIRQHLASNIGVAKSQIREKEPIVWEILQEVMRGHPVLLNRAPTLHRLGIQAFQPILVEGRAICLHPLVRKGFNADFDGDQMAVHVPLSLEAQSEARLLMFSHMNLLSPAIGDPISVPTQDMLIGLYVLTSGNRRGICANRYNPCNRRNYQNERIDDNNYRYTKEKEPFFCNSYDAIGAYRHKRINLYSPLWLRWQLDQRLIASKEAPIEVHYESLGTYHEIYGHYLIVRSVKKEIPCIYIRTTVGHISLYREIEEAIQGFCRACSYET</sequence>
<keyword id="KW-0150">Chloroplast</keyword>
<keyword id="KW-0240">DNA-directed RNA polymerase</keyword>
<keyword id="KW-0460">Magnesium</keyword>
<keyword id="KW-0479">Metal-binding</keyword>
<keyword id="KW-0548">Nucleotidyltransferase</keyword>
<keyword id="KW-0934">Plastid</keyword>
<keyword id="KW-1185">Reference proteome</keyword>
<keyword id="KW-0804">Transcription</keyword>
<keyword id="KW-0808">Transferase</keyword>
<keyword id="KW-0862">Zinc</keyword>